<comment type="similarity">
    <text evidence="1">Belongs to the bacterial ribosomal protein bL28 family.</text>
</comment>
<protein>
    <recommendedName>
        <fullName evidence="1">Large ribosomal subunit protein bL28</fullName>
    </recommendedName>
    <alternativeName>
        <fullName evidence="2">50S ribosomal protein L28</fullName>
    </alternativeName>
</protein>
<evidence type="ECO:0000255" key="1">
    <source>
        <dbReference type="HAMAP-Rule" id="MF_00373"/>
    </source>
</evidence>
<evidence type="ECO:0000305" key="2"/>
<dbReference type="EMBL" id="CP000726">
    <property type="protein sequence ID" value="ABS34203.1"/>
    <property type="molecule type" value="Genomic_DNA"/>
</dbReference>
<dbReference type="RefSeq" id="WP_003395976.1">
    <property type="nucleotide sequence ID" value="NC_009697.1"/>
</dbReference>
<dbReference type="SMR" id="A7FW64"/>
<dbReference type="GeneID" id="92939241"/>
<dbReference type="KEGG" id="cba:CLB_2371"/>
<dbReference type="HOGENOM" id="CLU_064548_7_0_9"/>
<dbReference type="GO" id="GO:1990904">
    <property type="term" value="C:ribonucleoprotein complex"/>
    <property type="evidence" value="ECO:0007669"/>
    <property type="project" value="UniProtKB-KW"/>
</dbReference>
<dbReference type="GO" id="GO:0005840">
    <property type="term" value="C:ribosome"/>
    <property type="evidence" value="ECO:0007669"/>
    <property type="project" value="UniProtKB-KW"/>
</dbReference>
<dbReference type="GO" id="GO:0003735">
    <property type="term" value="F:structural constituent of ribosome"/>
    <property type="evidence" value="ECO:0007669"/>
    <property type="project" value="InterPro"/>
</dbReference>
<dbReference type="GO" id="GO:0006412">
    <property type="term" value="P:translation"/>
    <property type="evidence" value="ECO:0007669"/>
    <property type="project" value="UniProtKB-UniRule"/>
</dbReference>
<dbReference type="Gene3D" id="2.30.170.40">
    <property type="entry name" value="Ribosomal protein L28/L24"/>
    <property type="match status" value="1"/>
</dbReference>
<dbReference type="HAMAP" id="MF_00373">
    <property type="entry name" value="Ribosomal_bL28"/>
    <property type="match status" value="1"/>
</dbReference>
<dbReference type="InterPro" id="IPR050096">
    <property type="entry name" value="Bacterial_rp_bL28"/>
</dbReference>
<dbReference type="InterPro" id="IPR026569">
    <property type="entry name" value="Ribosomal_bL28"/>
</dbReference>
<dbReference type="InterPro" id="IPR034704">
    <property type="entry name" value="Ribosomal_bL28/bL31-like_sf"/>
</dbReference>
<dbReference type="InterPro" id="IPR001383">
    <property type="entry name" value="Ribosomal_bL28_bact-type"/>
</dbReference>
<dbReference type="InterPro" id="IPR037147">
    <property type="entry name" value="Ribosomal_bL28_sf"/>
</dbReference>
<dbReference type="NCBIfam" id="TIGR00009">
    <property type="entry name" value="L28"/>
    <property type="match status" value="1"/>
</dbReference>
<dbReference type="PANTHER" id="PTHR39080">
    <property type="entry name" value="50S RIBOSOMAL PROTEIN L28"/>
    <property type="match status" value="1"/>
</dbReference>
<dbReference type="PANTHER" id="PTHR39080:SF1">
    <property type="entry name" value="LARGE RIBOSOMAL SUBUNIT PROTEIN BL28A"/>
    <property type="match status" value="1"/>
</dbReference>
<dbReference type="Pfam" id="PF00830">
    <property type="entry name" value="Ribosomal_L28"/>
    <property type="match status" value="1"/>
</dbReference>
<dbReference type="SUPFAM" id="SSF143800">
    <property type="entry name" value="L28p-like"/>
    <property type="match status" value="1"/>
</dbReference>
<name>RL28_CLOB1</name>
<sequence length="63" mass="7111">MSRKCEICGKGVVYGVQYSHSHRQSKRSFAPNIKRVKAIVNGTPKRVHVCTRCLRSGKVQRAI</sequence>
<organism>
    <name type="scientific">Clostridium botulinum (strain ATCC 19397 / Type A)</name>
    <dbReference type="NCBI Taxonomy" id="441770"/>
    <lineage>
        <taxon>Bacteria</taxon>
        <taxon>Bacillati</taxon>
        <taxon>Bacillota</taxon>
        <taxon>Clostridia</taxon>
        <taxon>Eubacteriales</taxon>
        <taxon>Clostridiaceae</taxon>
        <taxon>Clostridium</taxon>
    </lineage>
</organism>
<feature type="chain" id="PRO_1000007211" description="Large ribosomal subunit protein bL28">
    <location>
        <begin position="1"/>
        <end position="63"/>
    </location>
</feature>
<gene>
    <name evidence="1" type="primary">rpmB</name>
    <name type="ordered locus">CLB_2371</name>
</gene>
<reference key="1">
    <citation type="journal article" date="2007" name="PLoS ONE">
        <title>Analysis of the neurotoxin complex genes in Clostridium botulinum A1-A4 and B1 strains: BoNT/A3, /Ba4 and /B1 clusters are located within plasmids.</title>
        <authorList>
            <person name="Smith T.J."/>
            <person name="Hill K.K."/>
            <person name="Foley B.T."/>
            <person name="Detter J.C."/>
            <person name="Munk A.C."/>
            <person name="Bruce D.C."/>
            <person name="Doggett N.A."/>
            <person name="Smith L.A."/>
            <person name="Marks J.D."/>
            <person name="Xie G."/>
            <person name="Brettin T.S."/>
        </authorList>
    </citation>
    <scope>NUCLEOTIDE SEQUENCE [LARGE SCALE GENOMIC DNA]</scope>
    <source>
        <strain>ATCC 19397 / Type A</strain>
    </source>
</reference>
<accession>A7FW64</accession>
<keyword id="KW-0687">Ribonucleoprotein</keyword>
<keyword id="KW-0689">Ribosomal protein</keyword>
<proteinExistence type="inferred from homology"/>